<gene>
    <name type="ORF">ARB_01587</name>
</gene>
<reference key="1">
    <citation type="journal article" date="2011" name="Genome Biol.">
        <title>Comparative and functional genomics provide insights into the pathogenicity of dermatophytic fungi.</title>
        <authorList>
            <person name="Burmester A."/>
            <person name="Shelest E."/>
            <person name="Gloeckner G."/>
            <person name="Heddergott C."/>
            <person name="Schindler S."/>
            <person name="Staib P."/>
            <person name="Heidel A."/>
            <person name="Felder M."/>
            <person name="Petzold A."/>
            <person name="Szafranski K."/>
            <person name="Feuermann M."/>
            <person name="Pedruzzi I."/>
            <person name="Priebe S."/>
            <person name="Groth M."/>
            <person name="Winkler R."/>
            <person name="Li W."/>
            <person name="Kniemeyer O."/>
            <person name="Schroeckh V."/>
            <person name="Hertweck C."/>
            <person name="Hube B."/>
            <person name="White T.C."/>
            <person name="Platzer M."/>
            <person name="Guthke R."/>
            <person name="Heitman J."/>
            <person name="Woestemeyer J."/>
            <person name="Zipfel P.F."/>
            <person name="Monod M."/>
            <person name="Brakhage A.A."/>
        </authorList>
    </citation>
    <scope>NUCLEOTIDE SEQUENCE [LARGE SCALE GENOMIC DNA]</scope>
    <source>
        <strain>ATCC MYA-4681 / CBS 112371</strain>
    </source>
</reference>
<keyword id="KW-0121">Carboxypeptidase</keyword>
<keyword id="KW-0325">Glycoprotein</keyword>
<keyword id="KW-0378">Hydrolase</keyword>
<keyword id="KW-0645">Protease</keyword>
<keyword id="KW-1185">Reference proteome</keyword>
<keyword id="KW-0964">Secreted</keyword>
<keyword id="KW-0732">Signal</keyword>
<organism>
    <name type="scientific">Arthroderma benhamiae (strain ATCC MYA-4681 / CBS 112371)</name>
    <name type="common">Trichophyton mentagrophytes</name>
    <dbReference type="NCBI Taxonomy" id="663331"/>
    <lineage>
        <taxon>Eukaryota</taxon>
        <taxon>Fungi</taxon>
        <taxon>Dikarya</taxon>
        <taxon>Ascomycota</taxon>
        <taxon>Pezizomycotina</taxon>
        <taxon>Eurotiomycetes</taxon>
        <taxon>Eurotiomycetidae</taxon>
        <taxon>Onygenales</taxon>
        <taxon>Arthrodermataceae</taxon>
        <taxon>Trichophyton</taxon>
    </lineage>
</organism>
<proteinExistence type="inferred from homology"/>
<evidence type="ECO:0000250" key="1">
    <source>
        <dbReference type="UniProtKB" id="P00729"/>
    </source>
</evidence>
<evidence type="ECO:0000250" key="2">
    <source>
        <dbReference type="UniProtKB" id="P08819"/>
    </source>
</evidence>
<evidence type="ECO:0000255" key="3"/>
<evidence type="ECO:0000255" key="4">
    <source>
        <dbReference type="PROSITE-ProRule" id="PRU00498"/>
    </source>
</evidence>
<evidence type="ECO:0000255" key="5">
    <source>
        <dbReference type="PROSITE-ProRule" id="PRU10074"/>
    </source>
</evidence>
<evidence type="ECO:0000305" key="6"/>
<name>SCPE_ARTBC</name>
<feature type="signal peptide" evidence="3">
    <location>
        <begin position="1"/>
        <end position="15"/>
    </location>
</feature>
<feature type="chain" id="PRO_5003054560" description="Carboxypeptidase Y homolog ARB_06361">
    <location>
        <begin position="16"/>
        <end position="506"/>
    </location>
</feature>
<feature type="active site" evidence="5">
    <location>
        <position position="179"/>
    </location>
</feature>
<feature type="active site" evidence="2">
    <location>
        <position position="427"/>
    </location>
</feature>
<feature type="active site" evidence="1">
    <location>
        <position position="485"/>
    </location>
</feature>
<feature type="glycosylation site" description="N-linked (GlcNAc...) asparagine" evidence="4">
    <location>
        <position position="108"/>
    </location>
</feature>
<feature type="glycosylation site" description="N-linked (GlcNAc...) asparagine" evidence="4">
    <location>
        <position position="280"/>
    </location>
</feature>
<feature type="glycosylation site" description="N-linked (GlcNAc...) asparagine" evidence="4">
    <location>
        <position position="316"/>
    </location>
</feature>
<feature type="glycosylation site" description="N-linked (GlcNAc...) asparagine" evidence="4">
    <location>
        <position position="349"/>
    </location>
</feature>
<feature type="glycosylation site" description="N-linked (GlcNAc...) asparagine" evidence="4">
    <location>
        <position position="441"/>
    </location>
</feature>
<accession>D4AZG9</accession>
<dbReference type="EC" id="3.4.16.5" evidence="1"/>
<dbReference type="EMBL" id="ABSU01000021">
    <property type="protein sequence ID" value="EFE31439.1"/>
    <property type="molecule type" value="Genomic_DNA"/>
</dbReference>
<dbReference type="RefSeq" id="XP_003012079.1">
    <property type="nucleotide sequence ID" value="XM_003012033.1"/>
</dbReference>
<dbReference type="SMR" id="D4AZG9"/>
<dbReference type="ESTHER" id="artbc-scpe">
    <property type="family name" value="Carboxypeptidase_S10"/>
</dbReference>
<dbReference type="GeneID" id="9519566"/>
<dbReference type="KEGG" id="abe:ARB_01587"/>
<dbReference type="eggNOG" id="KOG1282">
    <property type="taxonomic scope" value="Eukaryota"/>
</dbReference>
<dbReference type="HOGENOM" id="CLU_008523_12_2_1"/>
<dbReference type="OMA" id="LNSTCYG"/>
<dbReference type="OrthoDB" id="443318at2759"/>
<dbReference type="Proteomes" id="UP000008866">
    <property type="component" value="Unassembled WGS sequence"/>
</dbReference>
<dbReference type="GO" id="GO:0005576">
    <property type="term" value="C:extracellular region"/>
    <property type="evidence" value="ECO:0007669"/>
    <property type="project" value="UniProtKB-SubCell"/>
</dbReference>
<dbReference type="GO" id="GO:0004185">
    <property type="term" value="F:serine-type carboxypeptidase activity"/>
    <property type="evidence" value="ECO:0007669"/>
    <property type="project" value="UniProtKB-EC"/>
</dbReference>
<dbReference type="GO" id="GO:0006508">
    <property type="term" value="P:proteolysis"/>
    <property type="evidence" value="ECO:0007669"/>
    <property type="project" value="UniProtKB-KW"/>
</dbReference>
<dbReference type="Gene3D" id="3.40.50.1820">
    <property type="entry name" value="alpha/beta hydrolase"/>
    <property type="match status" value="1"/>
</dbReference>
<dbReference type="InterPro" id="IPR029058">
    <property type="entry name" value="AB_hydrolase_fold"/>
</dbReference>
<dbReference type="InterPro" id="IPR001563">
    <property type="entry name" value="Peptidase_S10"/>
</dbReference>
<dbReference type="InterPro" id="IPR018202">
    <property type="entry name" value="Ser_caboxypep_ser_AS"/>
</dbReference>
<dbReference type="PANTHER" id="PTHR11802:SF479">
    <property type="entry name" value="CARBOXYPEPTIDASE"/>
    <property type="match status" value="1"/>
</dbReference>
<dbReference type="PANTHER" id="PTHR11802">
    <property type="entry name" value="SERINE PROTEASE FAMILY S10 SERINE CARBOXYPEPTIDASE"/>
    <property type="match status" value="1"/>
</dbReference>
<dbReference type="Pfam" id="PF00450">
    <property type="entry name" value="Peptidase_S10"/>
    <property type="match status" value="1"/>
</dbReference>
<dbReference type="PRINTS" id="PR00724">
    <property type="entry name" value="CRBOXYPTASEC"/>
</dbReference>
<dbReference type="SUPFAM" id="SSF53474">
    <property type="entry name" value="alpha/beta-Hydrolases"/>
    <property type="match status" value="1"/>
</dbReference>
<dbReference type="PROSITE" id="PS00131">
    <property type="entry name" value="CARBOXYPEPT_SER_SER"/>
    <property type="match status" value="1"/>
</dbReference>
<comment type="function">
    <text evidence="1">Involved in degradation of small peptides.</text>
</comment>
<comment type="catalytic activity">
    <reaction evidence="1">
        <text>Release of a C-terminal amino acid with broad specificity.</text>
        <dbReference type="EC" id="3.4.16.5"/>
    </reaction>
</comment>
<comment type="subcellular location">
    <subcellularLocation>
        <location evidence="6">Secreted</location>
    </subcellularLocation>
</comment>
<comment type="similarity">
    <text evidence="6">Belongs to the peptidase S10 family.</text>
</comment>
<sequence length="506" mass="56016">MHVAILLAIISLARAAPSTKGYTVATSLPGKSAFETRRLPDAPEILKNWAGRLDIPGTTIGNSLFFWLFSAEDKAYDDNLIIWLNGGPGCSSLVGAFLENGPLRFMGNSTMPERNPYSWAKLGHVLYIDQPVGTGFASEKVPVTSNKEVISNLYSWLMSFDAIFDHILRTKKVHIVGESYAGIYIPYIASEIVKRKSELPVNLVSIAIGDGTIGPNTGMSSLGMVGFLEEYASKLRIPRDIMNAISFGDHACGFDIIRQRAKVYPPRGPFHLPGRSGSANNTEISNMLQKGVADESLGSCNIHPDTPEKIRSSIVNSTCYGHCAVFETTADYMSSQQCFSIYNINYGCNFTNPTSTLEAYFSRSDVQIALNLMHPTDPLRPFQSCNPKILETLMAPANRPVPPSFEILPDLLTTHKLPVHIYQGRLDMLINHVGIEVTIQNMTWNGAQGFQDSLHFEFGRQKDKAVGLWNEERGLSYHLFFEGGHFLPADLPMEVLSYVKEVVLRQ</sequence>
<protein>
    <recommendedName>
        <fullName evidence="6">Carboxypeptidase Y homolog ARB_06361</fullName>
        <ecNumber evidence="1">3.4.16.5</ecNumber>
    </recommendedName>
    <alternativeName>
        <fullName evidence="6">Serine carboxypeptidase ARB_01587</fullName>
    </alternativeName>
</protein>